<proteinExistence type="evidence at protein level"/>
<sequence length="327" mass="36930">MGRDQVSHKRSQNSNVSEIPDLDSSLHRSEDTLVAEIIEAMTLAGVCVVRNLFTKSLVDQVLKDFEPHVSSTKLFDGYPGNGCHLTGLLSKSEIYAHMVVGNSVFEKVRNHFLSTTFRSWIGGKMMTFTSPPQLDSTICSYINPQSPGEHLHRDDAIHYGWNEAASEYTVGRDISMSMFLALTESTRENGTTRFFPGSHLWDYSQDFPSADDTRIRYAELHPGDCYFMLSSVTHSSTDNRSTNRPRVLAATIVTRSHLRQEENQYLTYDPITVGRFPTWLQRLVGYAPSAPFLGWVDKRDPRCVIDPKAADDHCGGEYYETNEETLN</sequence>
<organism>
    <name type="scientific">Aspergillus novofumigatus (strain IBT 16806)</name>
    <dbReference type="NCBI Taxonomy" id="1392255"/>
    <lineage>
        <taxon>Eukaryota</taxon>
        <taxon>Fungi</taxon>
        <taxon>Dikarya</taxon>
        <taxon>Ascomycota</taxon>
        <taxon>Pezizomycotina</taxon>
        <taxon>Eurotiomycetes</taxon>
        <taxon>Eurotiomycetidae</taxon>
        <taxon>Eurotiales</taxon>
        <taxon>Aspergillaceae</taxon>
        <taxon>Aspergillus</taxon>
        <taxon>Aspergillus subgen. Fumigati</taxon>
    </lineage>
</organism>
<feature type="chain" id="PRO_0000453080" description="Fumigatonoid B endoperoxide isomerase nvfE">
    <location>
        <begin position="1"/>
        <end position="327"/>
    </location>
</feature>
<feature type="region of interest" description="Disordered" evidence="3">
    <location>
        <begin position="1"/>
        <end position="22"/>
    </location>
</feature>
<feature type="binding site" evidence="1">
    <location>
        <position position="152"/>
    </location>
    <ligand>
        <name>Fe cation</name>
        <dbReference type="ChEBI" id="CHEBI:24875"/>
    </ligand>
</feature>
<feature type="binding site" evidence="1">
    <location>
        <position position="154"/>
    </location>
    <ligand>
        <name>Fe cation</name>
        <dbReference type="ChEBI" id="CHEBI:24875"/>
    </ligand>
</feature>
<feature type="binding site" evidence="1">
    <location>
        <position position="234"/>
    </location>
    <ligand>
        <name>Fe cation</name>
        <dbReference type="ChEBI" id="CHEBI:24875"/>
    </ligand>
</feature>
<protein>
    <recommendedName>
        <fullName evidence="5">Fumigatonoid B endoperoxide isomerase nvfE</fullName>
        <ecNumber evidence="4">5.4.99.-</ecNumber>
    </recommendedName>
    <alternativeName>
        <fullName evidence="5">Novofumigatonin biosynthesis cluster protein E</fullName>
    </alternativeName>
</protein>
<evidence type="ECO:0000250" key="1">
    <source>
        <dbReference type="UniProtKB" id="O14832"/>
    </source>
</evidence>
<evidence type="ECO:0000250" key="2">
    <source>
        <dbReference type="UniProtKB" id="Q4WAW9"/>
    </source>
</evidence>
<evidence type="ECO:0000256" key="3">
    <source>
        <dbReference type="SAM" id="MobiDB-lite"/>
    </source>
</evidence>
<evidence type="ECO:0000269" key="4">
    <source>
    </source>
</evidence>
<evidence type="ECO:0000303" key="5">
    <source>
    </source>
</evidence>
<evidence type="ECO:0000305" key="6"/>
<accession>A0A2I1BSW6</accession>
<comment type="function">
    <text evidence="4">Fumigatonoid B endoperoxide isomerase; part of the gene cluster that mediates the biosynthesis of novofumigatonin, a heavily oxygenated meroterpenoid containing a unique orthoester moiety (PubMed:29968715). The first step of the pathway is the synthesis of 3,5-dimethylorsellinic acid (DMOA) by the polyketide synthase nvfA via condensation of one acetyl-CoA starter unit with 3 malonyl-CoA units and 2 methylations (PubMed:29968715). DMOA is then converted to farnesyl-DMOA by the farnesyltransferase nvfB (PubMed:29968715). Epoxydation by FAD-dependent monooxygenase nvfK, followed by a protonation-initiated cyclization catalyzed by the terpene cyclase nvfL leads to the production of asnavolin H (PubMed:29968715). The short chain dehydrogenase nvfC then as a 3-OH dehydrogenase of asnovolin H to yield chemesin D (PubMed:29968715). There are two branches to synthesize asnovolin A from chemesin D (PubMed:29968715). In one branch, chemesin D undergoes Baeyer-Villiger oxidation by nvfH, methylation by nvfJ, and enoyl reduction by the nvfM D enoylreductase that reduces the double bond between C-5'and C-6', to form respectively asnovolin I, asnovolin K, and asnovolin A (PubMed:29968715). In the other branch, the methylation precedes the Baeyer-Villiger oxidation and the enoyl reduction to yield asnovolin A via the asnovolin J intermediate (PubMed:29968715). Asnovolin A is further converted to fumigatonoid A by the Fe(II)/2-oxoglutarate-dependent dioxygenase nvfI that catalyzes an endoperoxidation reaction (PubMed:29968715). The alpha/beta hydrolase nvfD then acts as an epimerase that converts fumigatonoid A to its C-5' epimer, which then undergoes spontaneous or nvfD-catalyzed lactonization (PubMed:29968715). The following step utilizes the ketoreductase nvfG to produce fumigatonoid B (PubMed:29968715). The dioxygenase nvfE further converts fumigatonoid B into fumigatonoid C (PubMed:29968715). Finally the Fe(II)/2-oxoglutarate-dependent dioxygenase nvfF catalyzes two rounds of oxidation to transform fumigatonoid C into the end product, novofumigatonin A (PubMed:29968715).</text>
</comment>
<comment type="catalytic activity">
    <reaction evidence="4">
        <text>fumigatonoid B = fumigatonoid C</text>
        <dbReference type="Rhea" id="RHEA:67100"/>
        <dbReference type="ChEBI" id="CHEBI:167688"/>
        <dbReference type="ChEBI" id="CHEBI:167689"/>
    </reaction>
    <physiologicalReaction direction="left-to-right" evidence="4">
        <dbReference type="Rhea" id="RHEA:67101"/>
    </physiologicalReaction>
</comment>
<comment type="cofactor">
    <cofactor evidence="2">
        <name>Fe cation</name>
        <dbReference type="ChEBI" id="CHEBI:24875"/>
    </cofactor>
</comment>
<comment type="pathway">
    <text evidence="4">Secondary metabolite biosynthesis; terpenoid biosynthesis.</text>
</comment>
<comment type="subunit">
    <text evidence="2">Homodimer.</text>
</comment>
<comment type="disruption phenotype">
    <text evidence="4">Completely abolishes the production of novofumigatonin, but accumulates fumigatonoid B and asnovolin A.</text>
</comment>
<comment type="similarity">
    <text evidence="6">Belongs to the PhyH family.</text>
</comment>
<comment type="sequence caution" evidence="4">
    <conflict type="erroneous gene model prediction">
        <sequence resource="EMBL-CDS" id="PKX88483"/>
    </conflict>
</comment>
<keyword id="KW-0408">Iron</keyword>
<keyword id="KW-0413">Isomerase</keyword>
<keyword id="KW-0479">Metal-binding</keyword>
<keyword id="KW-1185">Reference proteome</keyword>
<reference key="1">
    <citation type="journal article" date="2018" name="Proc. Natl. Acad. Sci. U.S.A.">
        <title>Linking secondary metabolites to gene clusters through genome sequencing of six diverse Aspergillus species.</title>
        <authorList>
            <person name="Kjaerboelling I."/>
            <person name="Vesth T.C."/>
            <person name="Frisvad J.C."/>
            <person name="Nybo J.L."/>
            <person name="Theobald S."/>
            <person name="Kuo A."/>
            <person name="Bowyer P."/>
            <person name="Matsuda Y."/>
            <person name="Mondo S."/>
            <person name="Lyhne E.K."/>
            <person name="Kogle M.E."/>
            <person name="Clum A."/>
            <person name="Lipzen A."/>
            <person name="Salamov A."/>
            <person name="Ngan C.Y."/>
            <person name="Daum C."/>
            <person name="Chiniquy J."/>
            <person name="Barry K."/>
            <person name="LaButti K."/>
            <person name="Haridas S."/>
            <person name="Simmons B.A."/>
            <person name="Magnuson J.K."/>
            <person name="Mortensen U.H."/>
            <person name="Larsen T.O."/>
            <person name="Grigoriev I.V."/>
            <person name="Baker S.E."/>
            <person name="Andersen M.R."/>
        </authorList>
    </citation>
    <scope>NUCLEOTIDE SEQUENCE [LARGE SCALE GENOMIC DNA]</scope>
    <source>
        <strain>IBT 16806</strain>
    </source>
</reference>
<reference key="2">
    <citation type="journal article" date="2018" name="Nat. Commun.">
        <title>Novofumigatonin biosynthesis involves a non-heme iron-dependent endoperoxide isomerase for orthoester formation.</title>
        <authorList>
            <person name="Matsuda Y."/>
            <person name="Bai T."/>
            <person name="Phippen C.B.W."/>
            <person name="Noedvig C.S."/>
            <person name="Kjaerboelling I."/>
            <person name="Vesth T.C."/>
            <person name="Andersen M.R."/>
            <person name="Mortensen U.H."/>
            <person name="Gotfredsen C.H."/>
            <person name="Abe I."/>
            <person name="Larsen T.O."/>
        </authorList>
    </citation>
    <scope>FUNCTION</scope>
    <scope>DISRUPTION PHENOTYPE</scope>
    <scope>CATALYTIC ACTIVITY</scope>
    <scope>PATHWAY</scope>
</reference>
<dbReference type="EC" id="5.4.99.-" evidence="4"/>
<dbReference type="EMBL" id="MSZS01000014">
    <property type="protein sequence ID" value="PKX88483.1"/>
    <property type="status" value="ALT_SEQ"/>
    <property type="molecule type" value="Genomic_DNA"/>
</dbReference>
<dbReference type="SMR" id="A0A2I1BSW6"/>
<dbReference type="STRING" id="1392255.A0A2I1BSW6"/>
<dbReference type="VEuPathDB" id="FungiDB:P174DRAFT_334013"/>
<dbReference type="OrthoDB" id="445007at2759"/>
<dbReference type="UniPathway" id="UPA00213"/>
<dbReference type="Proteomes" id="UP000234474">
    <property type="component" value="Unassembled WGS sequence"/>
</dbReference>
<dbReference type="GO" id="GO:0016853">
    <property type="term" value="F:isomerase activity"/>
    <property type="evidence" value="ECO:0007669"/>
    <property type="project" value="UniProtKB-KW"/>
</dbReference>
<dbReference type="GO" id="GO:0046872">
    <property type="term" value="F:metal ion binding"/>
    <property type="evidence" value="ECO:0007669"/>
    <property type="project" value="UniProtKB-KW"/>
</dbReference>
<dbReference type="GO" id="GO:0016491">
    <property type="term" value="F:oxidoreductase activity"/>
    <property type="evidence" value="ECO:0000314"/>
    <property type="project" value="UniProt"/>
</dbReference>
<dbReference type="GO" id="GO:0140782">
    <property type="term" value="P:novofumigatonin biosynthetic process"/>
    <property type="evidence" value="ECO:0000314"/>
    <property type="project" value="UniProt"/>
</dbReference>
<dbReference type="Gene3D" id="2.60.120.620">
    <property type="entry name" value="q2cbj1_9rhob like domain"/>
    <property type="match status" value="1"/>
</dbReference>
<dbReference type="InterPro" id="IPR008775">
    <property type="entry name" value="Phytyl_CoA_dOase-like"/>
</dbReference>
<dbReference type="PANTHER" id="PTHR20883">
    <property type="entry name" value="PHYTANOYL-COA DIOXYGENASE DOMAIN CONTAINING 1"/>
    <property type="match status" value="1"/>
</dbReference>
<dbReference type="PANTHER" id="PTHR20883:SF15">
    <property type="entry name" value="PHYTANOYL-COA DIOXYGENASE DOMAIN-CONTAINING PROTEIN 1"/>
    <property type="match status" value="1"/>
</dbReference>
<dbReference type="Pfam" id="PF05721">
    <property type="entry name" value="PhyH"/>
    <property type="match status" value="1"/>
</dbReference>
<dbReference type="SUPFAM" id="SSF51197">
    <property type="entry name" value="Clavaminate synthase-like"/>
    <property type="match status" value="1"/>
</dbReference>
<name>NVFE_ASPN1</name>
<gene>
    <name evidence="5" type="primary">nvfE</name>
    <name type="ORF">P174DRAFT_334013</name>
</gene>